<protein>
    <recommendedName>
        <fullName evidence="4">Oxidoreductase OpS5</fullName>
        <ecNumber evidence="3">1.-.-.-</ecNumber>
    </recommendedName>
    <alternativeName>
        <fullName evidence="4">Laccase OpS5</fullName>
    </alternativeName>
    <alternativeName>
        <fullName evidence="4">Oosporein biosynthesis protein 5</fullName>
    </alternativeName>
</protein>
<keyword id="KW-0186">Copper</keyword>
<keyword id="KW-0325">Glycoprotein</keyword>
<keyword id="KW-0479">Metal-binding</keyword>
<keyword id="KW-0560">Oxidoreductase</keyword>
<keyword id="KW-1185">Reference proteome</keyword>
<keyword id="KW-0677">Repeat</keyword>
<keyword id="KW-0732">Signal</keyword>
<keyword id="KW-0843">Virulence</keyword>
<name>OPS5_BEAB2</name>
<proteinExistence type="evidence at protein level"/>
<feature type="signal peptide" evidence="1">
    <location>
        <begin position="1"/>
        <end position="28"/>
    </location>
</feature>
<feature type="chain" id="PRO_5003784537" description="Oxidoreductase OpS5" evidence="1">
    <location>
        <begin position="29"/>
        <end position="590"/>
    </location>
</feature>
<feature type="domain" description="Plastocyanin-like 1" evidence="1">
    <location>
        <begin position="80"/>
        <end position="194"/>
    </location>
</feature>
<feature type="domain" description="Plastocyanin-like 2" evidence="1">
    <location>
        <begin position="205"/>
        <end position="358"/>
    </location>
</feature>
<feature type="domain" description="Plastocyanin-like 3" evidence="1">
    <location>
        <begin position="427"/>
        <end position="554"/>
    </location>
</feature>
<feature type="glycosylation site" description="N-linked (GlcNAc...) asparagine" evidence="2">
    <location>
        <position position="82"/>
    </location>
</feature>
<feature type="glycosylation site" description="N-linked (GlcNAc...) asparagine" evidence="2">
    <location>
        <position position="98"/>
    </location>
</feature>
<feature type="glycosylation site" description="N-linked (GlcNAc...) asparagine" evidence="2">
    <location>
        <position position="125"/>
    </location>
</feature>
<feature type="glycosylation site" description="N-linked (GlcNAc...) asparagine" evidence="2">
    <location>
        <position position="291"/>
    </location>
</feature>
<feature type="glycosylation site" description="N-linked (GlcNAc...) asparagine" evidence="2">
    <location>
        <position position="348"/>
    </location>
</feature>
<feature type="glycosylation site" description="N-linked (GlcNAc...) asparagine" evidence="2">
    <location>
        <position position="365"/>
    </location>
</feature>
<feature type="glycosylation site" description="N-linked (GlcNAc...) asparagine" evidence="2">
    <location>
        <position position="420"/>
    </location>
</feature>
<feature type="glycosylation site" description="N-linked (GlcNAc...) asparagine" evidence="2">
    <location>
        <position position="439"/>
    </location>
</feature>
<feature type="glycosylation site" description="N-linked (GlcNAc...) asparagine" evidence="2">
    <location>
        <position position="472"/>
    </location>
</feature>
<feature type="glycosylation site" description="N-linked (GlcNAc...) asparagine" evidence="2">
    <location>
        <position position="493"/>
    </location>
</feature>
<reference key="1">
    <citation type="journal article" date="2012" name="Sci. Rep.">
        <title>Genomic perspectives on the evolution of fungal entomopathogenicity in Beauveria bassiana.</title>
        <authorList>
            <person name="Xiao G."/>
            <person name="Ying S.-H."/>
            <person name="Zheng P."/>
            <person name="Wang Z.-L."/>
            <person name="Zhang S."/>
            <person name="Xie X.-Q."/>
            <person name="Shang Y."/>
            <person name="St Leger R.J."/>
            <person name="Zhao G.-P."/>
            <person name="Wang C."/>
            <person name="Feng M.-G."/>
        </authorList>
    </citation>
    <scope>NUCLEOTIDE SEQUENCE [LARGE SCALE GENOMIC DNA]</scope>
    <source>
        <strain>ARSEF 2860</strain>
    </source>
</reference>
<reference key="2">
    <citation type="journal article" date="2015" name="Proc. Natl. Acad. Sci. U.S.A.">
        <title>Fungal biosynthesis of the bibenzoquinone oosporein to evade insect immunity.</title>
        <authorList>
            <person name="Feng P."/>
            <person name="Shang Y."/>
            <person name="Cen K."/>
            <person name="Wang C."/>
        </authorList>
    </citation>
    <scope>FUNCTION</scope>
    <scope>DISRUPTION PHENOTYPE</scope>
    <scope>CATALYTIC ACTIVITY</scope>
    <scope>PATHWAY</scope>
</reference>
<gene>
    <name evidence="4" type="primary">OpS5</name>
    <name type="ORF">BBA_08183</name>
</gene>
<organism>
    <name type="scientific">Beauveria bassiana (strain ARSEF 2860)</name>
    <name type="common">White muscardine disease fungus</name>
    <name type="synonym">Tritirachium shiotae</name>
    <dbReference type="NCBI Taxonomy" id="655819"/>
    <lineage>
        <taxon>Eukaryota</taxon>
        <taxon>Fungi</taxon>
        <taxon>Dikarya</taxon>
        <taxon>Ascomycota</taxon>
        <taxon>Pezizomycotina</taxon>
        <taxon>Sordariomycetes</taxon>
        <taxon>Hypocreomycetidae</taxon>
        <taxon>Hypocreales</taxon>
        <taxon>Cordycipitaceae</taxon>
        <taxon>Beauveria</taxon>
    </lineage>
</organism>
<dbReference type="EC" id="1.-.-.-" evidence="3"/>
<dbReference type="EMBL" id="JH725181">
    <property type="protein sequence ID" value="EJP62796.1"/>
    <property type="molecule type" value="Genomic_DNA"/>
</dbReference>
<dbReference type="RefSeq" id="XP_008601502.1">
    <property type="nucleotide sequence ID" value="XM_008603280.1"/>
</dbReference>
<dbReference type="SMR" id="J5JH35"/>
<dbReference type="STRING" id="655819.J5JH35"/>
<dbReference type="GlyCosmos" id="J5JH35">
    <property type="glycosylation" value="10 sites, No reported glycans"/>
</dbReference>
<dbReference type="GeneID" id="19891195"/>
<dbReference type="HOGENOM" id="CLU_006504_3_2_1"/>
<dbReference type="InParanoid" id="J5JH35"/>
<dbReference type="OrthoDB" id="2162at474943"/>
<dbReference type="Proteomes" id="UP000002762">
    <property type="component" value="Unassembled WGS sequence"/>
</dbReference>
<dbReference type="GO" id="GO:0005507">
    <property type="term" value="F:copper ion binding"/>
    <property type="evidence" value="ECO:0007669"/>
    <property type="project" value="InterPro"/>
</dbReference>
<dbReference type="GO" id="GO:0016491">
    <property type="term" value="F:oxidoreductase activity"/>
    <property type="evidence" value="ECO:0007669"/>
    <property type="project" value="UniProtKB-KW"/>
</dbReference>
<dbReference type="CDD" id="cd13854">
    <property type="entry name" value="CuRO_1_MaLCC_like"/>
    <property type="match status" value="1"/>
</dbReference>
<dbReference type="CDD" id="cd13880">
    <property type="entry name" value="CuRO_2_MaLCC_like"/>
    <property type="match status" value="1"/>
</dbReference>
<dbReference type="CDD" id="cd13901">
    <property type="entry name" value="CuRO_3_MaLCC_like"/>
    <property type="match status" value="1"/>
</dbReference>
<dbReference type="FunFam" id="2.60.40.420:FF:000021">
    <property type="entry name" value="Extracellular dihydrogeodin oxidase/laccase"/>
    <property type="match status" value="1"/>
</dbReference>
<dbReference type="FunFam" id="2.60.40.420:FF:000038">
    <property type="entry name" value="Extracellular dihydrogeodin oxidase/laccase"/>
    <property type="match status" value="1"/>
</dbReference>
<dbReference type="Gene3D" id="2.60.40.420">
    <property type="entry name" value="Cupredoxins - blue copper proteins"/>
    <property type="match status" value="3"/>
</dbReference>
<dbReference type="InterPro" id="IPR011707">
    <property type="entry name" value="Cu-oxidase-like_N"/>
</dbReference>
<dbReference type="InterPro" id="IPR001117">
    <property type="entry name" value="Cu-oxidase_2nd"/>
</dbReference>
<dbReference type="InterPro" id="IPR011706">
    <property type="entry name" value="Cu-oxidase_C"/>
</dbReference>
<dbReference type="InterPro" id="IPR045087">
    <property type="entry name" value="Cu-oxidase_fam"/>
</dbReference>
<dbReference type="InterPro" id="IPR002355">
    <property type="entry name" value="Cu_oxidase_Cu_BS"/>
</dbReference>
<dbReference type="InterPro" id="IPR008972">
    <property type="entry name" value="Cupredoxin"/>
</dbReference>
<dbReference type="PANTHER" id="PTHR11709">
    <property type="entry name" value="MULTI-COPPER OXIDASE"/>
    <property type="match status" value="1"/>
</dbReference>
<dbReference type="PANTHER" id="PTHR11709:SF71">
    <property type="entry name" value="OXIDOREDUCTASE TPCJ"/>
    <property type="match status" value="1"/>
</dbReference>
<dbReference type="Pfam" id="PF00394">
    <property type="entry name" value="Cu-oxidase"/>
    <property type="match status" value="1"/>
</dbReference>
<dbReference type="Pfam" id="PF07731">
    <property type="entry name" value="Cu-oxidase_2"/>
    <property type="match status" value="1"/>
</dbReference>
<dbReference type="Pfam" id="PF07732">
    <property type="entry name" value="Cu-oxidase_3"/>
    <property type="match status" value="1"/>
</dbReference>
<dbReference type="SUPFAM" id="SSF49503">
    <property type="entry name" value="Cupredoxins"/>
    <property type="match status" value="3"/>
</dbReference>
<dbReference type="PROSITE" id="PS00080">
    <property type="entry name" value="MULTICOPPER_OXIDASE2"/>
    <property type="match status" value="1"/>
</dbReference>
<sequence>MMRPWTILIASSWLSLAAASASASACAAKPSVAAEIASIDHDNCEHGPNSRGCWGDYSINTNYYEQAPDTGVTREYWFVVENITMAPDGYEQHVLAINRSIPGPLIEANWGDEVVIHVTNNMERNGTAIHWHGIRQLNNNAHDGVPGVTQCPIPPGGSYTYRWKAEQYGTSWYHSHFSLQYSVGLQGPMIIHGPATANYDEDLGTVMLQDWSHVSPFAMWWYARVPSGPPSLSNSLINGKNIFRCTDPLDKNCLGTGERSEWHFEKGKRYRMRLVNTGLYSNFRFAIDGHNLTVIANDFVPIEPYTTDNVIISMGQRYDVIVEANAPEDNYWLRAIWQTSCCPNDYANDTLGIIRYDPQSTALPNTTHPALHYPDNCDDEPAEKLVPHVKVDAGPPARTDVFNLYRHTYDMPRGFMWTLNDTYLWIDWSKPTNLLVAENDTTIFPPNYLLYHTPDGPNQWVYIVFNDISERNRSHPMHLHGHDFFLLGTGEGNFTKDSPLQLKNPPRRDTASWPKRGYMVFAYKTDNPGAWLIHCHIAWHSSQGLGMQMLERPGEMTYTEDEDQALHQTCQSWNKFYESPEQYIQEDSGI</sequence>
<evidence type="ECO:0000255" key="1"/>
<evidence type="ECO:0000255" key="2">
    <source>
        <dbReference type="PROSITE-ProRule" id="PRU00498"/>
    </source>
</evidence>
<evidence type="ECO:0000269" key="3">
    <source>
    </source>
</evidence>
<evidence type="ECO:0000303" key="4">
    <source>
    </source>
</evidence>
<evidence type="ECO:0000305" key="5"/>
<accession>J5JH35</accession>
<comment type="function">
    <text evidence="3">Oxidoreductase; part of the gene cluster that mediates the biosynthesis of the bibenzoquinone oosporein, a metabolite required for fungal virulence that acts by evading host immunity to facilitate fungal multiplication in insects (PubMed:26305932). The non-reducing polyketide synthase OpS1 produces orsellinic acid by condensing acetyl-CoA with 3 malonyl-CoA units (PubMed:26305932). Orsellinic acid is then hydroxylated to benzenetriol by the hydroxylase OpS4 (PubMed:26305932). The intermediate is oxidized either nonenzymatically to 5,5'-dideoxy-oosporein or enzymatically to benzenetetrol by the oxidoreductase OpS7 (PubMed:26305932). The latter is further dimerized to oosporein by the catalase OpS5 (PubMed:26305932). OpS6 probably functions en route for protecting cells against oxidative stress by scavenging any leaked free radical form of benzenetetrol by activating the thiol group of glutathione (PubMed:26305932).</text>
</comment>
<comment type="pathway">
    <text evidence="3">Secondary metabolite biosynthesis.</text>
</comment>
<comment type="induction">
    <text evidence="3">Expression is negatively regulated by the global transcription factor Msn2 that binds the stress-response element 5'-AGGGG-3' (PubMed:26305932).</text>
</comment>
<comment type="disruption phenotype">
    <text evidence="3">Impairs the production of oosporein (PubMed:26305932).</text>
</comment>
<comment type="similarity">
    <text evidence="5">Belongs to the multicopper oxidase family.</text>
</comment>